<protein>
    <recommendedName>
        <fullName evidence="1">Eukaryotic translation initiation factor 3 subunit A</fullName>
        <shortName evidence="1">eIF3a</shortName>
    </recommendedName>
    <alternativeName>
        <fullName evidence="1">Eukaryotic translation initiation factor 3 subunit 10</fullName>
    </alternativeName>
</protein>
<organism>
    <name type="scientific">Anopheles gambiae</name>
    <name type="common">African malaria mosquito</name>
    <dbReference type="NCBI Taxonomy" id="7165"/>
    <lineage>
        <taxon>Eukaryota</taxon>
        <taxon>Metazoa</taxon>
        <taxon>Ecdysozoa</taxon>
        <taxon>Arthropoda</taxon>
        <taxon>Hexapoda</taxon>
        <taxon>Insecta</taxon>
        <taxon>Pterygota</taxon>
        <taxon>Neoptera</taxon>
        <taxon>Endopterygota</taxon>
        <taxon>Diptera</taxon>
        <taxon>Nematocera</taxon>
        <taxon>Culicoidea</taxon>
        <taxon>Culicidae</taxon>
        <taxon>Anophelinae</taxon>
        <taxon>Anopheles</taxon>
    </lineage>
</organism>
<comment type="function">
    <text evidence="1">RNA-binding component of the eukaryotic translation initiation factor 3 (eIF-3) complex, which is involved in protein synthesis of a specialized repertoire of mRNAs and, together with other initiation factors, stimulates binding of mRNA and methionyl-tRNAi to the 40S ribosome. The eIF-3 complex specifically targets and initiates translation of a subset of mRNAs involved in cell proliferation.</text>
</comment>
<comment type="subunit">
    <text evidence="1">Component of the eukaryotic translation initiation factor 3 (eIF-3) complex.</text>
</comment>
<comment type="subcellular location">
    <subcellularLocation>
        <location evidence="1">Cytoplasm</location>
    </subcellularLocation>
</comment>
<comment type="similarity">
    <text evidence="1">Belongs to the eIF-3 subunit A family.</text>
</comment>
<feature type="chain" id="PRO_0000366332" description="Eukaryotic translation initiation factor 3 subunit A">
    <location>
        <begin position="1"/>
        <end position="1124"/>
    </location>
</feature>
<feature type="domain" description="PCI" evidence="2">
    <location>
        <begin position="317"/>
        <end position="498"/>
    </location>
</feature>
<feature type="region of interest" description="Disordered" evidence="3">
    <location>
        <begin position="812"/>
        <end position="1124"/>
    </location>
</feature>
<feature type="coiled-coil region" evidence="1">
    <location>
        <begin position="96"/>
        <end position="124"/>
    </location>
</feature>
<feature type="compositionally biased region" description="Basic and acidic residues" evidence="3">
    <location>
        <begin position="812"/>
        <end position="851"/>
    </location>
</feature>
<feature type="compositionally biased region" description="Basic and acidic residues" evidence="3">
    <location>
        <begin position="860"/>
        <end position="883"/>
    </location>
</feature>
<feature type="compositionally biased region" description="Low complexity" evidence="3">
    <location>
        <begin position="900"/>
        <end position="910"/>
    </location>
</feature>
<feature type="compositionally biased region" description="Basic and acidic residues" evidence="3">
    <location>
        <begin position="928"/>
        <end position="952"/>
    </location>
</feature>
<feature type="compositionally biased region" description="Basic and acidic residues" evidence="3">
    <location>
        <begin position="960"/>
        <end position="990"/>
    </location>
</feature>
<feature type="compositionally biased region" description="Basic and acidic residues" evidence="3">
    <location>
        <begin position="1007"/>
        <end position="1048"/>
    </location>
</feature>
<feature type="compositionally biased region" description="Basic and acidic residues" evidence="3">
    <location>
        <begin position="1063"/>
        <end position="1100"/>
    </location>
</feature>
<sequence length="1124" mass="132343">MSRYVQRPENALKRANEFIDVGKKARALDTLQEVFRAKKWNYNWSESIIEPVMFKYLDLCVELKKSHIAKEGLFQYRNMFQLVNVGSLENVIRGYLKMAEERTEQAQQQSSQATVDIDDLDNLATPESILMSAVCGEDAQDRSDRTILLPWVKFLWESYCQCLELLKVNSHCETLYHDIARMAFQFCLKYNRKMEFRKLCEKLRKHLEDICKVSSQTANVTISKPETQQLNLETRLHQLDSAIQMELWLEAYKAIEDIHGLMQLSKKTPLPKTMALYYTKLAMVFWKAGNQLFHASALLKLFQLSRDMKKNVTAEEIQRMTTHVLIATLAIPLPSAHPEFDRFIETDKSPMEKAQRLAFLLGLQQSPSRALLLKELIRLNVLQLAAPQFRHLYQLLEVEFDPLNLCDQVQKIVDEIEADPNSVYGQYIQALKDVTLVRLVRQISQVYQTIEFPRLLELAKFADYHHLERILVDCVRHNDMQITIDHRNECVHFGTDLSESQREDHPDGPTLQSMPSEQIRSQLVNMSVVLHRAIATINPNRKKAERERLRAQMVHQYEENADKEHQRILQRQKKIEDRKEYIERMNQEREEEELRLQEEQVRMQKLAEQRRLEAENEERERKRHENELQMMKERNMKEKIEQIKQTATGQKLLKKLDEEEIRKLNTEEIAAREAEERLKERKAHENNLKTQEKKIDYFERAKRLEEIPLIEKYLQDRSVQDKEFWEKQEAARIEAAIAERKNAEACQERLKRMLPDRDVYWQQLKNERGNQFAEKLKQFNQALEEERKRRLADRVVKRREERRMKWLKEKEEERRRIEEELRKQKEEADRIERERRAEERRIQDEKNRQLAEKQLAIAEEVERRRREELEQMKEADGRRERRPAAGPAEPKPEESWRKGPAAAAPANPAADEPKKNVWQGSGRYGPGPRERGGETGPKDKWRTGPEDHEKDGGGAGGMRRGGDMRRGQDDRGPIRRGGGEERGEREDRGPIRRGGGPGDAPAGTGTPRRDDRPGGWFNRDRRDDRRDDRRDDRRDDRRGDDRGPRGGGERGNTWRRGPADNADDNRRGPRDEGRQDTWRNTRQDAAPKQKEDRPQREARPAQENVPPRSNAGPDEEGWTDVKHR</sequence>
<proteinExistence type="inferred from homology"/>
<name>EIF3A_ANOGA</name>
<dbReference type="EMBL" id="AAAB01008859">
    <property type="protein sequence ID" value="EAA44958.5"/>
    <property type="molecule type" value="Genomic_DNA"/>
</dbReference>
<dbReference type="RefSeq" id="XP_312628.5">
    <property type="nucleotide sequence ID" value="XM_312628.5"/>
</dbReference>
<dbReference type="SMR" id="Q7PGE8"/>
<dbReference type="FunCoup" id="Q7PGE8">
    <property type="interactions" value="2701"/>
</dbReference>
<dbReference type="STRING" id="7165.Q7PGE8"/>
<dbReference type="PaxDb" id="7165-AGAP002340-PA"/>
<dbReference type="EnsemblMetazoa" id="AGAP002340-RA">
    <property type="protein sequence ID" value="AGAP002340-PA"/>
    <property type="gene ID" value="AGAP002340"/>
</dbReference>
<dbReference type="GeneID" id="1273627"/>
<dbReference type="KEGG" id="aga:1273627"/>
<dbReference type="CTD" id="8661"/>
<dbReference type="VEuPathDB" id="VectorBase:AGAMI1_000625"/>
<dbReference type="VEuPathDB" id="VectorBase:AGAP002340"/>
<dbReference type="eggNOG" id="KOG2072">
    <property type="taxonomic scope" value="Eukaryota"/>
</dbReference>
<dbReference type="HOGENOM" id="CLU_002096_2_1_1"/>
<dbReference type="InParanoid" id="Q7PGE8"/>
<dbReference type="OMA" id="EHITNKR"/>
<dbReference type="PhylomeDB" id="Q7PGE8"/>
<dbReference type="Proteomes" id="UP000007062">
    <property type="component" value="Chromosome 2R"/>
</dbReference>
<dbReference type="GO" id="GO:0016282">
    <property type="term" value="C:eukaryotic 43S preinitiation complex"/>
    <property type="evidence" value="ECO:0007669"/>
    <property type="project" value="UniProtKB-UniRule"/>
</dbReference>
<dbReference type="GO" id="GO:0033290">
    <property type="term" value="C:eukaryotic 48S preinitiation complex"/>
    <property type="evidence" value="ECO:0007669"/>
    <property type="project" value="UniProtKB-UniRule"/>
</dbReference>
<dbReference type="GO" id="GO:0071540">
    <property type="term" value="C:eukaryotic translation initiation factor 3 complex, eIF3e"/>
    <property type="evidence" value="ECO:0000318"/>
    <property type="project" value="GO_Central"/>
</dbReference>
<dbReference type="GO" id="GO:0071541">
    <property type="term" value="C:eukaryotic translation initiation factor 3 complex, eIF3m"/>
    <property type="evidence" value="ECO:0000318"/>
    <property type="project" value="GO_Central"/>
</dbReference>
<dbReference type="GO" id="GO:0043614">
    <property type="term" value="C:multi-eIF complex"/>
    <property type="evidence" value="ECO:0000318"/>
    <property type="project" value="GO_Central"/>
</dbReference>
<dbReference type="GO" id="GO:0003729">
    <property type="term" value="F:mRNA binding"/>
    <property type="evidence" value="ECO:0000318"/>
    <property type="project" value="GO_Central"/>
</dbReference>
<dbReference type="GO" id="GO:0003743">
    <property type="term" value="F:translation initiation factor activity"/>
    <property type="evidence" value="ECO:0007669"/>
    <property type="project" value="UniProtKB-UniRule"/>
</dbReference>
<dbReference type="GO" id="GO:0001732">
    <property type="term" value="P:formation of cytoplasmic translation initiation complex"/>
    <property type="evidence" value="ECO:0000318"/>
    <property type="project" value="GO_Central"/>
</dbReference>
<dbReference type="GO" id="GO:0002188">
    <property type="term" value="P:translation reinitiation"/>
    <property type="evidence" value="ECO:0000318"/>
    <property type="project" value="GO_Central"/>
</dbReference>
<dbReference type="FunFam" id="1.25.40.860:FF:000007">
    <property type="entry name" value="Eukaryotic translation initiation factor 3 subunit A"/>
    <property type="match status" value="1"/>
</dbReference>
<dbReference type="FunFam" id="4.10.860.10:FF:000001">
    <property type="entry name" value="Eukaryotic translation initiation factor 3 subunit A"/>
    <property type="match status" value="1"/>
</dbReference>
<dbReference type="Gene3D" id="1.25.40.860">
    <property type="match status" value="2"/>
</dbReference>
<dbReference type="Gene3D" id="4.10.860.10">
    <property type="entry name" value="UVR domain"/>
    <property type="match status" value="1"/>
</dbReference>
<dbReference type="HAMAP" id="MF_03000">
    <property type="entry name" value="eIF3a"/>
    <property type="match status" value="1"/>
</dbReference>
<dbReference type="InterPro" id="IPR027512">
    <property type="entry name" value="EIF3A"/>
</dbReference>
<dbReference type="InterPro" id="IPR054711">
    <property type="entry name" value="eIF3a_PCI_TPR-like"/>
</dbReference>
<dbReference type="InterPro" id="IPR000717">
    <property type="entry name" value="PCI_dom"/>
</dbReference>
<dbReference type="PANTHER" id="PTHR14005:SF0">
    <property type="entry name" value="EUKARYOTIC TRANSLATION INITIATION FACTOR 3 SUBUNIT A"/>
    <property type="match status" value="1"/>
</dbReference>
<dbReference type="PANTHER" id="PTHR14005">
    <property type="entry name" value="EUKARYOTIC TRANSLATION INITIATION FACTOR 3, THETA SUBUNIT"/>
    <property type="match status" value="1"/>
</dbReference>
<dbReference type="Pfam" id="PF22591">
    <property type="entry name" value="eIF3a_PCI_TPR-like"/>
    <property type="match status" value="1"/>
</dbReference>
<dbReference type="Pfam" id="PF01399">
    <property type="entry name" value="PCI"/>
    <property type="match status" value="1"/>
</dbReference>
<dbReference type="SMART" id="SM00088">
    <property type="entry name" value="PINT"/>
    <property type="match status" value="1"/>
</dbReference>
<dbReference type="PROSITE" id="PS50250">
    <property type="entry name" value="PCI"/>
    <property type="match status" value="1"/>
</dbReference>
<accession>Q7PGE8</accession>
<gene>
    <name evidence="1" type="primary">eIF3-S10</name>
    <name type="ORF">AGAP002340</name>
</gene>
<reference key="1">
    <citation type="journal article" date="2002" name="Science">
        <title>The genome sequence of the malaria mosquito Anopheles gambiae.</title>
        <authorList>
            <person name="Holt R.A."/>
            <person name="Subramanian G.M."/>
            <person name="Halpern A."/>
            <person name="Sutton G.G."/>
            <person name="Charlab R."/>
            <person name="Nusskern D.R."/>
            <person name="Wincker P."/>
            <person name="Clark A.G."/>
            <person name="Ribeiro J.M.C."/>
            <person name="Wides R."/>
            <person name="Salzberg S.L."/>
            <person name="Loftus B.J."/>
            <person name="Yandell M.D."/>
            <person name="Majoros W.H."/>
            <person name="Rusch D.B."/>
            <person name="Lai Z."/>
            <person name="Kraft C.L."/>
            <person name="Abril J.F."/>
            <person name="Anthouard V."/>
            <person name="Arensburger P."/>
            <person name="Atkinson P.W."/>
            <person name="Baden H."/>
            <person name="de Berardinis V."/>
            <person name="Baldwin D."/>
            <person name="Benes V."/>
            <person name="Biedler J."/>
            <person name="Blass C."/>
            <person name="Bolanos R."/>
            <person name="Boscus D."/>
            <person name="Barnstead M."/>
            <person name="Cai S."/>
            <person name="Center A."/>
            <person name="Chaturverdi K."/>
            <person name="Christophides G.K."/>
            <person name="Chrystal M.A.M."/>
            <person name="Clamp M."/>
            <person name="Cravchik A."/>
            <person name="Curwen V."/>
            <person name="Dana A."/>
            <person name="Delcher A."/>
            <person name="Dew I."/>
            <person name="Evans C.A."/>
            <person name="Flanigan M."/>
            <person name="Grundschober-Freimoser A."/>
            <person name="Friedli L."/>
            <person name="Gu Z."/>
            <person name="Guan P."/>
            <person name="Guigo R."/>
            <person name="Hillenmeyer M.E."/>
            <person name="Hladun S.L."/>
            <person name="Hogan J.R."/>
            <person name="Hong Y.S."/>
            <person name="Hoover J."/>
            <person name="Jaillon O."/>
            <person name="Ke Z."/>
            <person name="Kodira C.D."/>
            <person name="Kokoza E."/>
            <person name="Koutsos A."/>
            <person name="Letunic I."/>
            <person name="Levitsky A.A."/>
            <person name="Liang Y."/>
            <person name="Lin J.-J."/>
            <person name="Lobo N.F."/>
            <person name="Lopez J.R."/>
            <person name="Malek J.A."/>
            <person name="McIntosh T.C."/>
            <person name="Meister S."/>
            <person name="Miller J.R."/>
            <person name="Mobarry C."/>
            <person name="Mongin E."/>
            <person name="Murphy S.D."/>
            <person name="O'Brochta D.A."/>
            <person name="Pfannkoch C."/>
            <person name="Qi R."/>
            <person name="Regier M.A."/>
            <person name="Remington K."/>
            <person name="Shao H."/>
            <person name="Sharakhova M.V."/>
            <person name="Sitter C.D."/>
            <person name="Shetty J."/>
            <person name="Smith T.J."/>
            <person name="Strong R."/>
            <person name="Sun J."/>
            <person name="Thomasova D."/>
            <person name="Ton L.Q."/>
            <person name="Topalis P."/>
            <person name="Tu Z.J."/>
            <person name="Unger M.F."/>
            <person name="Walenz B."/>
            <person name="Wang A.H."/>
            <person name="Wang J."/>
            <person name="Wang M."/>
            <person name="Wang X."/>
            <person name="Woodford K.J."/>
            <person name="Wortman J.R."/>
            <person name="Wu M."/>
            <person name="Yao A."/>
            <person name="Zdobnov E.M."/>
            <person name="Zhang H."/>
            <person name="Zhao Q."/>
            <person name="Zhao S."/>
            <person name="Zhu S.C."/>
            <person name="Zhimulev I."/>
            <person name="Coluzzi M."/>
            <person name="della Torre A."/>
            <person name="Roth C.W."/>
            <person name="Louis C."/>
            <person name="Kalush F."/>
            <person name="Mural R.J."/>
            <person name="Myers E.W."/>
            <person name="Adams M.D."/>
            <person name="Smith H.O."/>
            <person name="Broder S."/>
            <person name="Gardner M.J."/>
            <person name="Fraser C.M."/>
            <person name="Birney E."/>
            <person name="Bork P."/>
            <person name="Brey P.T."/>
            <person name="Venter J.C."/>
            <person name="Weissenbach J."/>
            <person name="Kafatos F.C."/>
            <person name="Collins F.H."/>
            <person name="Hoffman S.L."/>
        </authorList>
    </citation>
    <scope>NUCLEOTIDE SEQUENCE [LARGE SCALE GENOMIC DNA]</scope>
    <source>
        <strain>PEST</strain>
    </source>
</reference>
<evidence type="ECO:0000255" key="1">
    <source>
        <dbReference type="HAMAP-Rule" id="MF_03000"/>
    </source>
</evidence>
<evidence type="ECO:0000255" key="2">
    <source>
        <dbReference type="PROSITE-ProRule" id="PRU01185"/>
    </source>
</evidence>
<evidence type="ECO:0000256" key="3">
    <source>
        <dbReference type="SAM" id="MobiDB-lite"/>
    </source>
</evidence>
<keyword id="KW-0175">Coiled coil</keyword>
<keyword id="KW-0963">Cytoplasm</keyword>
<keyword id="KW-0396">Initiation factor</keyword>
<keyword id="KW-0648">Protein biosynthesis</keyword>
<keyword id="KW-1185">Reference proteome</keyword>
<keyword id="KW-0694">RNA-binding</keyword>